<proteinExistence type="inferred from homology"/>
<comment type="catalytic activity">
    <reaction evidence="1">
        <text>(6R)-10-formyltetrahydrofolate + 5-amino-1-(5-phospho-beta-D-ribosyl)imidazole-4-carboxamide = 5-formamido-1-(5-phospho-D-ribosyl)imidazole-4-carboxamide + (6S)-5,6,7,8-tetrahydrofolate</text>
        <dbReference type="Rhea" id="RHEA:22192"/>
        <dbReference type="ChEBI" id="CHEBI:57453"/>
        <dbReference type="ChEBI" id="CHEBI:58467"/>
        <dbReference type="ChEBI" id="CHEBI:58475"/>
        <dbReference type="ChEBI" id="CHEBI:195366"/>
        <dbReference type="EC" id="2.1.2.3"/>
    </reaction>
</comment>
<comment type="catalytic activity">
    <reaction evidence="1">
        <text>IMP + H2O = 5-formamido-1-(5-phospho-D-ribosyl)imidazole-4-carboxamide</text>
        <dbReference type="Rhea" id="RHEA:18445"/>
        <dbReference type="ChEBI" id="CHEBI:15377"/>
        <dbReference type="ChEBI" id="CHEBI:58053"/>
        <dbReference type="ChEBI" id="CHEBI:58467"/>
        <dbReference type="EC" id="3.5.4.10"/>
    </reaction>
</comment>
<comment type="pathway">
    <text evidence="1">Purine metabolism; IMP biosynthesis via de novo pathway; 5-formamido-1-(5-phospho-D-ribosyl)imidazole-4-carboxamide from 5-amino-1-(5-phospho-D-ribosyl)imidazole-4-carboxamide (10-formyl THF route): step 1/1.</text>
</comment>
<comment type="pathway">
    <text evidence="1">Purine metabolism; IMP biosynthesis via de novo pathway; IMP from 5-formamido-1-(5-phospho-D-ribosyl)imidazole-4-carboxamide: step 1/1.</text>
</comment>
<comment type="domain">
    <text evidence="1">The IMP cyclohydrolase activity resides in the N-terminal region.</text>
</comment>
<comment type="similarity">
    <text evidence="1">Belongs to the PurH family.</text>
</comment>
<name>PUR9_NEIG2</name>
<reference key="1">
    <citation type="journal article" date="2008" name="J. Bacteriol.">
        <title>Complete genome sequence of Neisseria gonorrhoeae NCCP11945.</title>
        <authorList>
            <person name="Chung G.T."/>
            <person name="Yoo J.S."/>
            <person name="Oh H.B."/>
            <person name="Lee Y.S."/>
            <person name="Cha S.H."/>
            <person name="Kim S.J."/>
            <person name="Yoo C.K."/>
        </authorList>
    </citation>
    <scope>NUCLEOTIDE SEQUENCE [LARGE SCALE GENOMIC DNA]</scope>
    <source>
        <strain>NCCP11945</strain>
    </source>
</reference>
<feature type="chain" id="PRO_1000096076" description="Bifunctional purine biosynthesis protein PurH">
    <location>
        <begin position="1"/>
        <end position="526"/>
    </location>
</feature>
<feature type="domain" description="MGS-like" evidence="2">
    <location>
        <begin position="1"/>
        <end position="147"/>
    </location>
</feature>
<dbReference type="EC" id="2.1.2.3" evidence="1"/>
<dbReference type="EC" id="3.5.4.10" evidence="1"/>
<dbReference type="EMBL" id="CP001050">
    <property type="protein sequence ID" value="ACF30376.1"/>
    <property type="molecule type" value="Genomic_DNA"/>
</dbReference>
<dbReference type="RefSeq" id="WP_012503846.1">
    <property type="nucleotide sequence ID" value="NC_011035.1"/>
</dbReference>
<dbReference type="SMR" id="B4RP71"/>
<dbReference type="KEGG" id="ngk:NGK_1731"/>
<dbReference type="HOGENOM" id="CLU_016316_5_2_4"/>
<dbReference type="UniPathway" id="UPA00074">
    <property type="reaction ID" value="UER00133"/>
</dbReference>
<dbReference type="UniPathway" id="UPA00074">
    <property type="reaction ID" value="UER00135"/>
</dbReference>
<dbReference type="Proteomes" id="UP000002564">
    <property type="component" value="Chromosome"/>
</dbReference>
<dbReference type="GO" id="GO:0005829">
    <property type="term" value="C:cytosol"/>
    <property type="evidence" value="ECO:0007669"/>
    <property type="project" value="TreeGrafter"/>
</dbReference>
<dbReference type="GO" id="GO:0003937">
    <property type="term" value="F:IMP cyclohydrolase activity"/>
    <property type="evidence" value="ECO:0007669"/>
    <property type="project" value="UniProtKB-UniRule"/>
</dbReference>
<dbReference type="GO" id="GO:0004643">
    <property type="term" value="F:phosphoribosylaminoimidazolecarboxamide formyltransferase activity"/>
    <property type="evidence" value="ECO:0007669"/>
    <property type="project" value="UniProtKB-UniRule"/>
</dbReference>
<dbReference type="GO" id="GO:0006189">
    <property type="term" value="P:'de novo' IMP biosynthetic process"/>
    <property type="evidence" value="ECO:0007669"/>
    <property type="project" value="UniProtKB-UniRule"/>
</dbReference>
<dbReference type="CDD" id="cd01421">
    <property type="entry name" value="IMPCH"/>
    <property type="match status" value="1"/>
</dbReference>
<dbReference type="FunFam" id="3.40.140.20:FF:000001">
    <property type="entry name" value="Bifunctional purine biosynthesis protein PurH"/>
    <property type="match status" value="1"/>
</dbReference>
<dbReference type="FunFam" id="3.40.140.20:FF:000002">
    <property type="entry name" value="Bifunctional purine biosynthesis protein PurH"/>
    <property type="match status" value="1"/>
</dbReference>
<dbReference type="FunFam" id="3.40.50.1380:FF:000001">
    <property type="entry name" value="Bifunctional purine biosynthesis protein PurH"/>
    <property type="match status" value="1"/>
</dbReference>
<dbReference type="Gene3D" id="3.40.140.20">
    <property type="match status" value="2"/>
</dbReference>
<dbReference type="Gene3D" id="3.40.50.1380">
    <property type="entry name" value="Methylglyoxal synthase-like domain"/>
    <property type="match status" value="1"/>
</dbReference>
<dbReference type="HAMAP" id="MF_00139">
    <property type="entry name" value="PurH"/>
    <property type="match status" value="1"/>
</dbReference>
<dbReference type="InterPro" id="IPR024051">
    <property type="entry name" value="AICAR_Tfase_dup_dom_sf"/>
</dbReference>
<dbReference type="InterPro" id="IPR016193">
    <property type="entry name" value="Cytidine_deaminase-like"/>
</dbReference>
<dbReference type="InterPro" id="IPR011607">
    <property type="entry name" value="MGS-like_dom"/>
</dbReference>
<dbReference type="InterPro" id="IPR036914">
    <property type="entry name" value="MGS-like_dom_sf"/>
</dbReference>
<dbReference type="InterPro" id="IPR002695">
    <property type="entry name" value="PurH-like"/>
</dbReference>
<dbReference type="NCBIfam" id="NF002049">
    <property type="entry name" value="PRK00881.1"/>
    <property type="match status" value="1"/>
</dbReference>
<dbReference type="NCBIfam" id="TIGR00355">
    <property type="entry name" value="purH"/>
    <property type="match status" value="1"/>
</dbReference>
<dbReference type="PANTHER" id="PTHR11692:SF0">
    <property type="entry name" value="BIFUNCTIONAL PURINE BIOSYNTHESIS PROTEIN ATIC"/>
    <property type="match status" value="1"/>
</dbReference>
<dbReference type="PANTHER" id="PTHR11692">
    <property type="entry name" value="BIFUNCTIONAL PURINE BIOSYNTHESIS PROTEIN PURH"/>
    <property type="match status" value="1"/>
</dbReference>
<dbReference type="Pfam" id="PF01808">
    <property type="entry name" value="AICARFT_IMPCHas"/>
    <property type="match status" value="1"/>
</dbReference>
<dbReference type="Pfam" id="PF02142">
    <property type="entry name" value="MGS"/>
    <property type="match status" value="1"/>
</dbReference>
<dbReference type="PIRSF" id="PIRSF000414">
    <property type="entry name" value="AICARFT_IMPCHas"/>
    <property type="match status" value="1"/>
</dbReference>
<dbReference type="SMART" id="SM00798">
    <property type="entry name" value="AICARFT_IMPCHas"/>
    <property type="match status" value="1"/>
</dbReference>
<dbReference type="SMART" id="SM00851">
    <property type="entry name" value="MGS"/>
    <property type="match status" value="1"/>
</dbReference>
<dbReference type="SUPFAM" id="SSF53927">
    <property type="entry name" value="Cytidine deaminase-like"/>
    <property type="match status" value="1"/>
</dbReference>
<dbReference type="SUPFAM" id="SSF52335">
    <property type="entry name" value="Methylglyoxal synthase-like"/>
    <property type="match status" value="1"/>
</dbReference>
<dbReference type="PROSITE" id="PS51855">
    <property type="entry name" value="MGS"/>
    <property type="match status" value="1"/>
</dbReference>
<sequence>MSVIKRALISLSDKAGAVEFAQNLHKLGVEILSTGGTAKLLADAGVPVIEVADYTGFPEMLDGRVKTLHPKIHGGILGRRDLDEHVAKMEEHGIGNIDLVCVNLYPFAATIAKPGCTLEDAIENIDIGGPAMVRSAAKNWKHVAIVTDTADFPAIAAELEANNGALSDKTRFNLSRKAFSHTAQYDGMISNYLTSLSDDVLSGQPQIGEFPSRFNQSWIKVQDMRYGENPHQRAAFYRDIDPAAGSLSAYNQLQGKELSYNNIADADAAWEAVKSFDAPACVIVKHANPCGVAVAADTLTAYKLAYATDTTSAFGGIIAFNREVDGETVKQITDNQFMEVLMAPKFTAEALEIAAAKKNVRVLEVPLKAGANRFELKRVGGGLLVQTPDINRINRADLKVVSKRQPTEQEWNDLLFVWNVAKYVKSNAIVFGKGGQTYGIGAGQMSRVDSTRIAARKAQDAGLDLNGACAASDAFFPFRDGVDVIAEQGIKAIIHPAGSMRDQEVFDAADEHGIAMAVTGIRHFRH</sequence>
<accession>B4RP71</accession>
<protein>
    <recommendedName>
        <fullName evidence="1">Bifunctional purine biosynthesis protein PurH</fullName>
    </recommendedName>
    <domain>
        <recommendedName>
            <fullName evidence="1">Phosphoribosylaminoimidazolecarboxamide formyltransferase</fullName>
            <ecNumber evidence="1">2.1.2.3</ecNumber>
        </recommendedName>
        <alternativeName>
            <fullName evidence="1">AICAR transformylase</fullName>
        </alternativeName>
    </domain>
    <domain>
        <recommendedName>
            <fullName evidence="1">IMP cyclohydrolase</fullName>
            <ecNumber evidence="1">3.5.4.10</ecNumber>
        </recommendedName>
        <alternativeName>
            <fullName evidence="1">ATIC</fullName>
        </alternativeName>
        <alternativeName>
            <fullName evidence="1">IMP synthase</fullName>
        </alternativeName>
        <alternativeName>
            <fullName evidence="1">Inosinicase</fullName>
        </alternativeName>
    </domain>
</protein>
<evidence type="ECO:0000255" key="1">
    <source>
        <dbReference type="HAMAP-Rule" id="MF_00139"/>
    </source>
</evidence>
<evidence type="ECO:0000255" key="2">
    <source>
        <dbReference type="PROSITE-ProRule" id="PRU01202"/>
    </source>
</evidence>
<keyword id="KW-0378">Hydrolase</keyword>
<keyword id="KW-0511">Multifunctional enzyme</keyword>
<keyword id="KW-0658">Purine biosynthesis</keyword>
<keyword id="KW-0808">Transferase</keyword>
<organism>
    <name type="scientific">Neisseria gonorrhoeae (strain NCCP11945)</name>
    <dbReference type="NCBI Taxonomy" id="521006"/>
    <lineage>
        <taxon>Bacteria</taxon>
        <taxon>Pseudomonadati</taxon>
        <taxon>Pseudomonadota</taxon>
        <taxon>Betaproteobacteria</taxon>
        <taxon>Neisseriales</taxon>
        <taxon>Neisseriaceae</taxon>
        <taxon>Neisseria</taxon>
    </lineage>
</organism>
<gene>
    <name evidence="1" type="primary">purH</name>
    <name type="ordered locus">NGK_1731</name>
</gene>